<accession>Q9CLT9</accession>
<evidence type="ECO:0000255" key="1">
    <source>
        <dbReference type="HAMAP-Rule" id="MF_01108"/>
    </source>
</evidence>
<evidence type="ECO:0000305" key="2"/>
<sequence length="382" mass="42333">MKKIPSFLQMYSALIASPTMSSIDPHFDQSNRTLIELLANWLSSLGFRTEVIPLEGSRDKFNLLATYGEGEGGLLLAGHTDTVPFDEGRWQFDPFKLTEKDGKFYGLGTADMKGFFAFVIDAVSQLDLTRLTKPLRILATADEETTMLGARTFIQHSHIRPDCAIIGEPTSLKPIRAHKGHVGEALRITGKSGHSSDPSKGINAIELMHEATGYLMQMRDELRQKYHHAAFNIPYPTMNFGAISGGDAVNRICACCELHFDIRPLPNLRLTDLNEMLQAKLAPMFEKWGGRISLQALHDPIPGYECAHSAQVVQVVEKLLGEQCETVNYCTEAPFIQQLCPTLVLGPGSIEQAHQPDEFLSAEFIDPTRELLSKLIGQFCTG</sequence>
<comment type="function">
    <text evidence="1">Catalyzes the hydrolysis of the amide bond of N(2)-acetylated L-amino acids. Cleaves the acetyl group from N-acetyl-L-ornithine to form L-ornithine, an intermediate in L-arginine biosynthesis pathway, and a branchpoint in the synthesis of polyamines.</text>
</comment>
<comment type="catalytic activity">
    <reaction evidence="1">
        <text>N(2)-acetyl-L-ornithine + H2O = L-ornithine + acetate</text>
        <dbReference type="Rhea" id="RHEA:15941"/>
        <dbReference type="ChEBI" id="CHEBI:15377"/>
        <dbReference type="ChEBI" id="CHEBI:30089"/>
        <dbReference type="ChEBI" id="CHEBI:46911"/>
        <dbReference type="ChEBI" id="CHEBI:57805"/>
        <dbReference type="EC" id="3.5.1.16"/>
    </reaction>
</comment>
<comment type="cofactor">
    <cofactor evidence="1">
        <name>Zn(2+)</name>
        <dbReference type="ChEBI" id="CHEBI:29105"/>
    </cofactor>
    <cofactor evidence="1">
        <name>Co(2+)</name>
        <dbReference type="ChEBI" id="CHEBI:48828"/>
    </cofactor>
    <text evidence="1">Binds 2 Zn(2+) or Co(2+) ions per subunit.</text>
</comment>
<comment type="cofactor">
    <cofactor evidence="1">
        <name>glutathione</name>
        <dbReference type="ChEBI" id="CHEBI:57925"/>
    </cofactor>
</comment>
<comment type="pathway">
    <text evidence="1">Amino-acid biosynthesis; L-arginine biosynthesis; L-ornithine from N(2)-acetyl-L-ornithine (linear): step 1/1.</text>
</comment>
<comment type="subunit">
    <text evidence="1">Homodimer.</text>
</comment>
<comment type="subcellular location">
    <subcellularLocation>
        <location evidence="1">Cytoplasm</location>
    </subcellularLocation>
</comment>
<comment type="similarity">
    <text evidence="1 2">Belongs to the peptidase M20A family. ArgE subfamily.</text>
</comment>
<comment type="sequence caution" evidence="2">
    <conflict type="erroneous initiation">
        <sequence resource="EMBL-CDS" id="AAK03201"/>
    </conflict>
</comment>
<keyword id="KW-0028">Amino-acid biosynthesis</keyword>
<keyword id="KW-0055">Arginine biosynthesis</keyword>
<keyword id="KW-0170">Cobalt</keyword>
<keyword id="KW-0963">Cytoplasm</keyword>
<keyword id="KW-0378">Hydrolase</keyword>
<keyword id="KW-0479">Metal-binding</keyword>
<keyword id="KW-1185">Reference proteome</keyword>
<keyword id="KW-0862">Zinc</keyword>
<name>ARGE_PASMU</name>
<organism>
    <name type="scientific">Pasteurella multocida (strain Pm70)</name>
    <dbReference type="NCBI Taxonomy" id="272843"/>
    <lineage>
        <taxon>Bacteria</taxon>
        <taxon>Pseudomonadati</taxon>
        <taxon>Pseudomonadota</taxon>
        <taxon>Gammaproteobacteria</taxon>
        <taxon>Pasteurellales</taxon>
        <taxon>Pasteurellaceae</taxon>
        <taxon>Pasteurella</taxon>
    </lineage>
</organism>
<dbReference type="EC" id="3.5.1.16" evidence="1"/>
<dbReference type="EMBL" id="AE004439">
    <property type="protein sequence ID" value="AAK03201.1"/>
    <property type="status" value="ALT_INIT"/>
    <property type="molecule type" value="Genomic_DNA"/>
</dbReference>
<dbReference type="RefSeq" id="WP_016533842.1">
    <property type="nucleotide sequence ID" value="NC_002663.1"/>
</dbReference>
<dbReference type="SMR" id="Q9CLT9"/>
<dbReference type="STRING" id="272843.PM1117"/>
<dbReference type="EnsemblBacteria" id="AAK03201">
    <property type="protein sequence ID" value="AAK03201"/>
    <property type="gene ID" value="PM1117"/>
</dbReference>
<dbReference type="KEGG" id="pmu:PM1117"/>
<dbReference type="PATRIC" id="fig|272843.6.peg.1130"/>
<dbReference type="HOGENOM" id="CLU_021802_2_4_6"/>
<dbReference type="OrthoDB" id="3665926at2"/>
<dbReference type="UniPathway" id="UPA00068">
    <property type="reaction ID" value="UER00110"/>
</dbReference>
<dbReference type="Proteomes" id="UP000000809">
    <property type="component" value="Chromosome"/>
</dbReference>
<dbReference type="GO" id="GO:0005737">
    <property type="term" value="C:cytoplasm"/>
    <property type="evidence" value="ECO:0007669"/>
    <property type="project" value="UniProtKB-SubCell"/>
</dbReference>
<dbReference type="GO" id="GO:0008777">
    <property type="term" value="F:acetylornithine deacetylase activity"/>
    <property type="evidence" value="ECO:0007669"/>
    <property type="project" value="UniProtKB-EC"/>
</dbReference>
<dbReference type="GO" id="GO:0046872">
    <property type="term" value="F:metal ion binding"/>
    <property type="evidence" value="ECO:0007669"/>
    <property type="project" value="UniProtKB-KW"/>
</dbReference>
<dbReference type="GO" id="GO:0006526">
    <property type="term" value="P:L-arginine biosynthetic process"/>
    <property type="evidence" value="ECO:0007669"/>
    <property type="project" value="UniProtKB-UniPathway"/>
</dbReference>
<dbReference type="CDD" id="cd03894">
    <property type="entry name" value="M20_ArgE"/>
    <property type="match status" value="1"/>
</dbReference>
<dbReference type="FunFam" id="3.30.70.360:FF:000003">
    <property type="entry name" value="Acetylornithine deacetylase"/>
    <property type="match status" value="1"/>
</dbReference>
<dbReference type="Gene3D" id="3.30.70.360">
    <property type="match status" value="1"/>
</dbReference>
<dbReference type="Gene3D" id="3.40.630.10">
    <property type="entry name" value="Zn peptidases"/>
    <property type="match status" value="1"/>
</dbReference>
<dbReference type="HAMAP" id="MF_01108">
    <property type="entry name" value="ArgE"/>
    <property type="match status" value="1"/>
</dbReference>
<dbReference type="InterPro" id="IPR010169">
    <property type="entry name" value="AcOrn-deacetyl"/>
</dbReference>
<dbReference type="InterPro" id="IPR001261">
    <property type="entry name" value="ArgE/DapE_CS"/>
</dbReference>
<dbReference type="InterPro" id="IPR036264">
    <property type="entry name" value="Bact_exopeptidase_dim_dom"/>
</dbReference>
<dbReference type="InterPro" id="IPR002933">
    <property type="entry name" value="Peptidase_M20"/>
</dbReference>
<dbReference type="InterPro" id="IPR011650">
    <property type="entry name" value="Peptidase_M20_dimer"/>
</dbReference>
<dbReference type="InterPro" id="IPR050072">
    <property type="entry name" value="Peptidase_M20A"/>
</dbReference>
<dbReference type="NCBIfam" id="TIGR01892">
    <property type="entry name" value="AcOrn-deacetyl"/>
    <property type="match status" value="1"/>
</dbReference>
<dbReference type="NCBIfam" id="NF003474">
    <property type="entry name" value="PRK05111.1"/>
    <property type="match status" value="1"/>
</dbReference>
<dbReference type="PANTHER" id="PTHR43808">
    <property type="entry name" value="ACETYLORNITHINE DEACETYLASE"/>
    <property type="match status" value="1"/>
</dbReference>
<dbReference type="PANTHER" id="PTHR43808:SF1">
    <property type="entry name" value="ACETYLORNITHINE DEACETYLASE"/>
    <property type="match status" value="1"/>
</dbReference>
<dbReference type="Pfam" id="PF07687">
    <property type="entry name" value="M20_dimer"/>
    <property type="match status" value="1"/>
</dbReference>
<dbReference type="Pfam" id="PF01546">
    <property type="entry name" value="Peptidase_M20"/>
    <property type="match status" value="1"/>
</dbReference>
<dbReference type="SUPFAM" id="SSF55031">
    <property type="entry name" value="Bacterial exopeptidase dimerisation domain"/>
    <property type="match status" value="1"/>
</dbReference>
<dbReference type="SUPFAM" id="SSF53187">
    <property type="entry name" value="Zn-dependent exopeptidases"/>
    <property type="match status" value="1"/>
</dbReference>
<dbReference type="PROSITE" id="PS00758">
    <property type="entry name" value="ARGE_DAPE_CPG2_1"/>
    <property type="match status" value="1"/>
</dbReference>
<dbReference type="PROSITE" id="PS00759">
    <property type="entry name" value="ARGE_DAPE_CPG2_2"/>
    <property type="match status" value="1"/>
</dbReference>
<gene>
    <name evidence="1" type="primary">argE</name>
    <name type="ordered locus">PM1117</name>
</gene>
<reference key="1">
    <citation type="journal article" date="2001" name="Proc. Natl. Acad. Sci. U.S.A.">
        <title>Complete genomic sequence of Pasteurella multocida Pm70.</title>
        <authorList>
            <person name="May B.J."/>
            <person name="Zhang Q."/>
            <person name="Li L.L."/>
            <person name="Paustian M.L."/>
            <person name="Whittam T.S."/>
            <person name="Kapur V."/>
        </authorList>
    </citation>
    <scope>NUCLEOTIDE SEQUENCE [LARGE SCALE GENOMIC DNA]</scope>
    <source>
        <strain>Pm70</strain>
    </source>
</reference>
<proteinExistence type="inferred from homology"/>
<feature type="chain" id="PRO_0000185246" description="Acetylornithine deacetylase">
    <location>
        <begin position="1"/>
        <end position="382"/>
    </location>
</feature>
<feature type="active site" evidence="1">
    <location>
        <position position="81"/>
    </location>
</feature>
<feature type="active site" evidence="1">
    <location>
        <position position="143"/>
    </location>
</feature>
<feature type="binding site" evidence="1">
    <location>
        <position position="79"/>
    </location>
    <ligand>
        <name>Zn(2+)</name>
        <dbReference type="ChEBI" id="CHEBI:29105"/>
        <label>1</label>
    </ligand>
</feature>
<feature type="binding site" evidence="1">
    <location>
        <position position="111"/>
    </location>
    <ligand>
        <name>Zn(2+)</name>
        <dbReference type="ChEBI" id="CHEBI:29105"/>
        <label>1</label>
    </ligand>
</feature>
<feature type="binding site" evidence="1">
    <location>
        <position position="111"/>
    </location>
    <ligand>
        <name>Zn(2+)</name>
        <dbReference type="ChEBI" id="CHEBI:29105"/>
        <label>2</label>
    </ligand>
</feature>
<feature type="binding site" evidence="1">
    <location>
        <position position="144"/>
    </location>
    <ligand>
        <name>Zn(2+)</name>
        <dbReference type="ChEBI" id="CHEBI:29105"/>
        <label>2</label>
    </ligand>
</feature>
<feature type="binding site" evidence="1">
    <location>
        <position position="168"/>
    </location>
    <ligand>
        <name>Zn(2+)</name>
        <dbReference type="ChEBI" id="CHEBI:29105"/>
        <label>1</label>
    </ligand>
</feature>
<feature type="binding site" evidence="1">
    <location>
        <position position="354"/>
    </location>
    <ligand>
        <name>Zn(2+)</name>
        <dbReference type="ChEBI" id="CHEBI:29105"/>
        <label>2</label>
    </ligand>
</feature>
<protein>
    <recommendedName>
        <fullName evidence="1">Acetylornithine deacetylase</fullName>
        <shortName evidence="1">AO</shortName>
        <shortName evidence="1">Acetylornithinase</shortName>
        <ecNumber evidence="1">3.5.1.16</ecNumber>
    </recommendedName>
    <alternativeName>
        <fullName evidence="1">N-acetylornithinase</fullName>
        <shortName evidence="1">NAO</shortName>
    </alternativeName>
</protein>